<sequence length="86" mass="9760">MKTLLLTLVVLTIACLDLGYTKTCFNDDLANPKTTELCRHSMYFCFKNSWIAGGVERIERGCSLTCPDIKYNGKYIYCCTRDNCNA</sequence>
<evidence type="ECO:0000250" key="1"/>
<evidence type="ECO:0000250" key="2">
    <source>
        <dbReference type="UniProtKB" id="P60301"/>
    </source>
</evidence>
<evidence type="ECO:0000305" key="3"/>
<reference key="1">
    <citation type="submission" date="2001-10" db="EMBL/GenBank/DDBJ databases">
        <title>Structural and functional genomics of Bungarus candidus.</title>
        <authorList>
            <person name="Tsai I.H."/>
            <person name="Wang Y.M."/>
            <person name="Hsu H.Y."/>
        </authorList>
    </citation>
    <scope>NUCLEOTIDE SEQUENCE [MRNA]</scope>
    <source>
        <tissue>Venom gland</tissue>
    </source>
</reference>
<protein>
    <recommendedName>
        <fullName>Candiduxin-1</fullName>
    </recommendedName>
</protein>
<dbReference type="EMBL" id="AY057875">
    <property type="protein sequence ID" value="AAL30057.1"/>
    <property type="molecule type" value="mRNA"/>
</dbReference>
<dbReference type="SMR" id="Q8AY53"/>
<dbReference type="GO" id="GO:0005576">
    <property type="term" value="C:extracellular region"/>
    <property type="evidence" value="ECO:0007669"/>
    <property type="project" value="UniProtKB-SubCell"/>
</dbReference>
<dbReference type="GO" id="GO:0090729">
    <property type="term" value="F:toxin activity"/>
    <property type="evidence" value="ECO:0007669"/>
    <property type="project" value="UniProtKB-KW"/>
</dbReference>
<dbReference type="CDD" id="cd00206">
    <property type="entry name" value="TFP_snake_toxin"/>
    <property type="match status" value="1"/>
</dbReference>
<dbReference type="Gene3D" id="2.10.60.10">
    <property type="entry name" value="CD59"/>
    <property type="match status" value="1"/>
</dbReference>
<dbReference type="InterPro" id="IPR003571">
    <property type="entry name" value="Snake_3FTx"/>
</dbReference>
<dbReference type="InterPro" id="IPR045860">
    <property type="entry name" value="Snake_toxin-like_sf"/>
</dbReference>
<dbReference type="InterPro" id="IPR018354">
    <property type="entry name" value="Snake_toxin_con_site"/>
</dbReference>
<dbReference type="InterPro" id="IPR054131">
    <property type="entry name" value="Toxin_cobra-type"/>
</dbReference>
<dbReference type="Pfam" id="PF21947">
    <property type="entry name" value="Toxin_cobra-type"/>
    <property type="match status" value="1"/>
</dbReference>
<dbReference type="SUPFAM" id="SSF57302">
    <property type="entry name" value="Snake toxin-like"/>
    <property type="match status" value="1"/>
</dbReference>
<dbReference type="PROSITE" id="PS00272">
    <property type="entry name" value="SNAKE_TOXIN"/>
    <property type="match status" value="1"/>
</dbReference>
<accession>Q8AY53</accession>
<proteinExistence type="inferred from homology"/>
<comment type="subcellular location">
    <subcellularLocation>
        <location evidence="1">Secreted</location>
    </subcellularLocation>
</comment>
<comment type="tissue specificity">
    <text evidence="3">Expressed by the venom gland.</text>
</comment>
<comment type="similarity">
    <text evidence="3">Belongs to the three-finger toxin family. Short-chain subfamily. Orphan group IX sub-subfamily.</text>
</comment>
<feature type="signal peptide" evidence="1">
    <location>
        <begin position="1"/>
        <end position="21"/>
    </location>
</feature>
<feature type="chain" id="PRO_0000035418" description="Candiduxin-1">
    <location>
        <begin position="22"/>
        <end position="86"/>
    </location>
</feature>
<feature type="disulfide bond" evidence="2">
    <location>
        <begin position="24"/>
        <end position="45"/>
    </location>
</feature>
<feature type="disulfide bond" evidence="2">
    <location>
        <begin position="38"/>
        <end position="62"/>
    </location>
</feature>
<feature type="disulfide bond" evidence="2">
    <location>
        <begin position="66"/>
        <end position="78"/>
    </location>
</feature>
<feature type="disulfide bond" evidence="2">
    <location>
        <begin position="79"/>
        <end position="84"/>
    </location>
</feature>
<organism>
    <name type="scientific">Bungarus candidus</name>
    <name type="common">Malayan krait</name>
    <dbReference type="NCBI Taxonomy" id="92438"/>
    <lineage>
        <taxon>Eukaryota</taxon>
        <taxon>Metazoa</taxon>
        <taxon>Chordata</taxon>
        <taxon>Craniata</taxon>
        <taxon>Vertebrata</taxon>
        <taxon>Euteleostomi</taxon>
        <taxon>Lepidosauria</taxon>
        <taxon>Squamata</taxon>
        <taxon>Bifurcata</taxon>
        <taxon>Unidentata</taxon>
        <taxon>Episquamata</taxon>
        <taxon>Toxicofera</taxon>
        <taxon>Serpentes</taxon>
        <taxon>Colubroidea</taxon>
        <taxon>Elapidae</taxon>
        <taxon>Bungarinae</taxon>
        <taxon>Bungarus</taxon>
    </lineage>
</organism>
<keyword id="KW-1015">Disulfide bond</keyword>
<keyword id="KW-0964">Secreted</keyword>
<keyword id="KW-0732">Signal</keyword>
<keyword id="KW-0800">Toxin</keyword>
<name>3SO91_BUNCA</name>